<evidence type="ECO:0000255" key="1"/>
<evidence type="ECO:0000269" key="2">
    <source>
    </source>
</evidence>
<evidence type="ECO:0000305" key="3"/>
<keyword id="KW-0175">Coiled coil</keyword>
<keyword id="KW-0472">Membrane</keyword>
<keyword id="KW-0496">Mitochondrion</keyword>
<keyword id="KW-1185">Reference proteome</keyword>
<keyword id="KW-0809">Transit peptide</keyword>
<keyword id="KW-0812">Transmembrane</keyword>
<keyword id="KW-1133">Transmembrane helix</keyword>
<reference key="1">
    <citation type="journal article" date="2002" name="Nature">
        <title>The genome sequence of Schizosaccharomyces pombe.</title>
        <authorList>
            <person name="Wood V."/>
            <person name="Gwilliam R."/>
            <person name="Rajandream M.A."/>
            <person name="Lyne M.H."/>
            <person name="Lyne R."/>
            <person name="Stewart A."/>
            <person name="Sgouros J.G."/>
            <person name="Peat N."/>
            <person name="Hayles J."/>
            <person name="Baker S.G."/>
            <person name="Basham D."/>
            <person name="Bowman S."/>
            <person name="Brooks K."/>
            <person name="Brown D."/>
            <person name="Brown S."/>
            <person name="Chillingworth T."/>
            <person name="Churcher C.M."/>
            <person name="Collins M."/>
            <person name="Connor R."/>
            <person name="Cronin A."/>
            <person name="Davis P."/>
            <person name="Feltwell T."/>
            <person name="Fraser A."/>
            <person name="Gentles S."/>
            <person name="Goble A."/>
            <person name="Hamlin N."/>
            <person name="Harris D.E."/>
            <person name="Hidalgo J."/>
            <person name="Hodgson G."/>
            <person name="Holroyd S."/>
            <person name="Hornsby T."/>
            <person name="Howarth S."/>
            <person name="Huckle E.J."/>
            <person name="Hunt S."/>
            <person name="Jagels K."/>
            <person name="James K.D."/>
            <person name="Jones L."/>
            <person name="Jones M."/>
            <person name="Leather S."/>
            <person name="McDonald S."/>
            <person name="McLean J."/>
            <person name="Mooney P."/>
            <person name="Moule S."/>
            <person name="Mungall K.L."/>
            <person name="Murphy L.D."/>
            <person name="Niblett D."/>
            <person name="Odell C."/>
            <person name="Oliver K."/>
            <person name="O'Neil S."/>
            <person name="Pearson D."/>
            <person name="Quail M.A."/>
            <person name="Rabbinowitsch E."/>
            <person name="Rutherford K.M."/>
            <person name="Rutter S."/>
            <person name="Saunders D."/>
            <person name="Seeger K."/>
            <person name="Sharp S."/>
            <person name="Skelton J."/>
            <person name="Simmonds M.N."/>
            <person name="Squares R."/>
            <person name="Squares S."/>
            <person name="Stevens K."/>
            <person name="Taylor K."/>
            <person name="Taylor R.G."/>
            <person name="Tivey A."/>
            <person name="Walsh S.V."/>
            <person name="Warren T."/>
            <person name="Whitehead S."/>
            <person name="Woodward J.R."/>
            <person name="Volckaert G."/>
            <person name="Aert R."/>
            <person name="Robben J."/>
            <person name="Grymonprez B."/>
            <person name="Weltjens I."/>
            <person name="Vanstreels E."/>
            <person name="Rieger M."/>
            <person name="Schaefer M."/>
            <person name="Mueller-Auer S."/>
            <person name="Gabel C."/>
            <person name="Fuchs M."/>
            <person name="Duesterhoeft A."/>
            <person name="Fritzc C."/>
            <person name="Holzer E."/>
            <person name="Moestl D."/>
            <person name="Hilbert H."/>
            <person name="Borzym K."/>
            <person name="Langer I."/>
            <person name="Beck A."/>
            <person name="Lehrach H."/>
            <person name="Reinhardt R."/>
            <person name="Pohl T.M."/>
            <person name="Eger P."/>
            <person name="Zimmermann W."/>
            <person name="Wedler H."/>
            <person name="Wambutt R."/>
            <person name="Purnelle B."/>
            <person name="Goffeau A."/>
            <person name="Cadieu E."/>
            <person name="Dreano S."/>
            <person name="Gloux S."/>
            <person name="Lelaure V."/>
            <person name="Mottier S."/>
            <person name="Galibert F."/>
            <person name="Aves S.J."/>
            <person name="Xiang Z."/>
            <person name="Hunt C."/>
            <person name="Moore K."/>
            <person name="Hurst S.M."/>
            <person name="Lucas M."/>
            <person name="Rochet M."/>
            <person name="Gaillardin C."/>
            <person name="Tallada V.A."/>
            <person name="Garzon A."/>
            <person name="Thode G."/>
            <person name="Daga R.R."/>
            <person name="Cruzado L."/>
            <person name="Jimenez J."/>
            <person name="Sanchez M."/>
            <person name="del Rey F."/>
            <person name="Benito J."/>
            <person name="Dominguez A."/>
            <person name="Revuelta J.L."/>
            <person name="Moreno S."/>
            <person name="Armstrong J."/>
            <person name="Forsburg S.L."/>
            <person name="Cerutti L."/>
            <person name="Lowe T."/>
            <person name="McCombie W.R."/>
            <person name="Paulsen I."/>
            <person name="Potashkin J."/>
            <person name="Shpakovski G.V."/>
            <person name="Ussery D."/>
            <person name="Barrell B.G."/>
            <person name="Nurse P."/>
        </authorList>
    </citation>
    <scope>NUCLEOTIDE SEQUENCE [LARGE SCALE GENOMIC DNA]</scope>
    <source>
        <strain>972 / ATCC 24843</strain>
    </source>
</reference>
<reference key="2">
    <citation type="journal article" date="2006" name="Nat. Biotechnol.">
        <title>ORFeome cloning and global analysis of protein localization in the fission yeast Schizosaccharomyces pombe.</title>
        <authorList>
            <person name="Matsuyama A."/>
            <person name="Arai R."/>
            <person name="Yashiroda Y."/>
            <person name="Shirai A."/>
            <person name="Kamata A."/>
            <person name="Sekido S."/>
            <person name="Kobayashi Y."/>
            <person name="Hashimoto A."/>
            <person name="Hamamoto M."/>
            <person name="Hiraoka Y."/>
            <person name="Horinouchi S."/>
            <person name="Yoshida M."/>
        </authorList>
    </citation>
    <scope>SUBCELLULAR LOCATION [LARGE SCALE ANALYSIS]</scope>
</reference>
<organism>
    <name type="scientific">Schizosaccharomyces pombe (strain 972 / ATCC 24843)</name>
    <name type="common">Fission yeast</name>
    <dbReference type="NCBI Taxonomy" id="284812"/>
    <lineage>
        <taxon>Eukaryota</taxon>
        <taxon>Fungi</taxon>
        <taxon>Dikarya</taxon>
        <taxon>Ascomycota</taxon>
        <taxon>Taphrinomycotina</taxon>
        <taxon>Schizosaccharomycetes</taxon>
        <taxon>Schizosaccharomycetales</taxon>
        <taxon>Schizosaccharomycetaceae</taxon>
        <taxon>Schizosaccharomyces</taxon>
    </lineage>
</organism>
<dbReference type="EMBL" id="CU329670">
    <property type="protein sequence ID" value="CAB16369.1"/>
    <property type="molecule type" value="Genomic_DNA"/>
</dbReference>
<dbReference type="PIR" id="T38520">
    <property type="entry name" value="T38520"/>
</dbReference>
<dbReference type="RefSeq" id="NP_594512.1">
    <property type="nucleotide sequence ID" value="NM_001019941.2"/>
</dbReference>
<dbReference type="SMR" id="O14042"/>
<dbReference type="BioGRID" id="278515">
    <property type="interactions" value="9"/>
</dbReference>
<dbReference type="FunCoup" id="O14042">
    <property type="interactions" value="312"/>
</dbReference>
<dbReference type="STRING" id="284812.O14042"/>
<dbReference type="PaxDb" id="4896-SPAC2C4.09.1"/>
<dbReference type="EnsemblFungi" id="SPAC2C4.09.1">
    <property type="protein sequence ID" value="SPAC2C4.09.1:pep"/>
    <property type="gene ID" value="SPAC2C4.09"/>
</dbReference>
<dbReference type="KEGG" id="spo:2542033"/>
<dbReference type="PomBase" id="SPAC2C4.09"/>
<dbReference type="VEuPathDB" id="FungiDB:SPAC2C4.09"/>
<dbReference type="eggNOG" id="KOG3156">
    <property type="taxonomic scope" value="Eukaryota"/>
</dbReference>
<dbReference type="HOGENOM" id="CLU_063283_2_0_1"/>
<dbReference type="InParanoid" id="O14042"/>
<dbReference type="OMA" id="TMLETHK"/>
<dbReference type="PhylomeDB" id="O14042"/>
<dbReference type="PRO" id="PR:O14042"/>
<dbReference type="Proteomes" id="UP000002485">
    <property type="component" value="Chromosome I"/>
</dbReference>
<dbReference type="GO" id="GO:0005743">
    <property type="term" value="C:mitochondrial inner membrane"/>
    <property type="evidence" value="ECO:0000266"/>
    <property type="project" value="PomBase"/>
</dbReference>
<dbReference type="GO" id="GO:0005739">
    <property type="term" value="C:mitochondrion"/>
    <property type="evidence" value="ECO:0007005"/>
    <property type="project" value="PomBase"/>
</dbReference>
<dbReference type="GO" id="GO:0036444">
    <property type="term" value="P:calcium import into the mitochondrion"/>
    <property type="evidence" value="ECO:0000266"/>
    <property type="project" value="PomBase"/>
</dbReference>
<dbReference type="GO" id="GO:0033617">
    <property type="term" value="P:mitochondrial cytochrome c oxidase assembly"/>
    <property type="evidence" value="ECO:0000318"/>
    <property type="project" value="GO_Central"/>
</dbReference>
<dbReference type="FunFam" id="1.20.5.340:FF:000018">
    <property type="entry name" value="Mitochondrial protein FMP32"/>
    <property type="match status" value="1"/>
</dbReference>
<dbReference type="Gene3D" id="1.20.5.340">
    <property type="match status" value="1"/>
</dbReference>
<dbReference type="InterPro" id="IPR024461">
    <property type="entry name" value="CCDC90-like"/>
</dbReference>
<dbReference type="PANTHER" id="PTHR14360">
    <property type="entry name" value="PROTEIN FMP32, MITOCHONDRIAL"/>
    <property type="match status" value="1"/>
</dbReference>
<dbReference type="PANTHER" id="PTHR14360:SF1">
    <property type="entry name" value="PROTEIN FMP32, MITOCHONDRIAL"/>
    <property type="match status" value="1"/>
</dbReference>
<dbReference type="Pfam" id="PF07798">
    <property type="entry name" value="CCDC90-like"/>
    <property type="match status" value="1"/>
</dbReference>
<protein>
    <recommendedName>
        <fullName>Protein fmp32, mitochondrial</fullName>
    </recommendedName>
</protein>
<accession>O14042</accession>
<name>FMP32_SCHPO</name>
<proteinExistence type="inferred from homology"/>
<sequence>MYLKIPCNSIYHQFQPLFRARTVHKVRSLGLNGFYRKYHGFNSLRFVRVLQEAGIDDKKSETLMRLISNVYSDMHEKISDFSVTKEQQDRVMYQQKVDFAHLRSELQSIERQEMVALHSQVEQLFSDVERLKTSFRDQLNNSTSEARLQLNIDRLNHYDETASQDLKLRELSAEIDTEMSNFRTQLASFKTQTLQWVFGIVTGSGALLLAYVRLII</sequence>
<comment type="subcellular location">
    <subcellularLocation>
        <location evidence="2">Mitochondrion</location>
    </subcellularLocation>
    <subcellularLocation>
        <location evidence="3">Membrane</location>
        <topology evidence="3">Single-pass membrane protein</topology>
    </subcellularLocation>
</comment>
<comment type="similarity">
    <text evidence="3">Belongs to the CCDC90 family.</text>
</comment>
<gene>
    <name type="primary">fmp32</name>
    <name type="ORF">SPAC2C4.09</name>
</gene>
<feature type="transit peptide" description="Mitochondrion" evidence="1">
    <location>
        <begin position="1"/>
        <end status="unknown"/>
    </location>
</feature>
<feature type="chain" id="PRO_0000363390" description="Protein fmp32, mitochondrial">
    <location>
        <begin status="unknown"/>
        <end position="216"/>
    </location>
</feature>
<feature type="transmembrane region" description="Helical" evidence="1">
    <location>
        <begin position="193"/>
        <end position="215"/>
    </location>
</feature>
<feature type="coiled-coil region" evidence="1">
    <location>
        <begin position="111"/>
        <end position="133"/>
    </location>
</feature>